<comment type="subcellular location">
    <subcellularLocation>
        <location evidence="1">Secreted</location>
    </subcellularLocation>
</comment>
<comment type="tissue specificity">
    <text>Expressed by the venom duct.</text>
</comment>
<comment type="domain">
    <text evidence="1">The presence of a 'disulfide through disulfide knot' structurally defines this protein as a knottin.</text>
</comment>
<comment type="domain">
    <text>The cysteine framework is VI/VII (C-C-CC-C-C).</text>
</comment>
<comment type="similarity">
    <text evidence="3">Belongs to the conotoxin O1 superfamily.</text>
</comment>
<keyword id="KW-0165">Cleavage on pair of basic residues</keyword>
<keyword id="KW-1015">Disulfide bond</keyword>
<keyword id="KW-0960">Knottin</keyword>
<keyword id="KW-0528">Neurotoxin</keyword>
<keyword id="KW-0964">Secreted</keyword>
<keyword id="KW-0732">Signal</keyword>
<keyword id="KW-0800">Toxin</keyword>
<protein>
    <recommendedName>
        <fullName>Conotoxin PnMKLT1-1111</fullName>
    </recommendedName>
</protein>
<reference key="1">
    <citation type="journal article" date="2001" name="Mol. Biol. Evol.">
        <title>Mechanisms for evolving hypervariability: the case of conopeptides.</title>
        <authorList>
            <person name="Conticello S.G."/>
            <person name="Gilad Y."/>
            <person name="Avidan N."/>
            <person name="Ben-Asher E."/>
            <person name="Levy Z."/>
            <person name="Fainzilber M."/>
        </authorList>
    </citation>
    <scope>NUCLEOTIDE SEQUENCE [MRNA]</scope>
    <source>
        <tissue>Venom duct</tissue>
    </source>
</reference>
<evidence type="ECO:0000250" key="1"/>
<evidence type="ECO:0000255" key="2"/>
<evidence type="ECO:0000305" key="3"/>
<name>O1612_CONPE</name>
<accession>Q9U662</accession>
<dbReference type="EMBL" id="AF193254">
    <property type="protein sequence ID" value="AAF07965.1"/>
    <property type="molecule type" value="mRNA"/>
</dbReference>
<dbReference type="ConoServer" id="1087">
    <property type="toxin name" value="Pn6.12 precursor"/>
</dbReference>
<dbReference type="GO" id="GO:0005576">
    <property type="term" value="C:extracellular region"/>
    <property type="evidence" value="ECO:0007669"/>
    <property type="project" value="UniProtKB-SubCell"/>
</dbReference>
<dbReference type="GO" id="GO:0008200">
    <property type="term" value="F:ion channel inhibitor activity"/>
    <property type="evidence" value="ECO:0007669"/>
    <property type="project" value="InterPro"/>
</dbReference>
<dbReference type="GO" id="GO:0090729">
    <property type="term" value="F:toxin activity"/>
    <property type="evidence" value="ECO:0007669"/>
    <property type="project" value="UniProtKB-KW"/>
</dbReference>
<dbReference type="InterPro" id="IPR004214">
    <property type="entry name" value="Conotoxin"/>
</dbReference>
<dbReference type="Pfam" id="PF02950">
    <property type="entry name" value="Conotoxin"/>
    <property type="match status" value="1"/>
</dbReference>
<organism>
    <name type="scientific">Conus pennaceus</name>
    <name type="common">Feathered cone</name>
    <name type="synonym">Conus episcopus</name>
    <dbReference type="NCBI Taxonomy" id="37335"/>
    <lineage>
        <taxon>Eukaryota</taxon>
        <taxon>Metazoa</taxon>
        <taxon>Spiralia</taxon>
        <taxon>Lophotrochozoa</taxon>
        <taxon>Mollusca</taxon>
        <taxon>Gastropoda</taxon>
        <taxon>Caenogastropoda</taxon>
        <taxon>Neogastropoda</taxon>
        <taxon>Conoidea</taxon>
        <taxon>Conidae</taxon>
        <taxon>Conus</taxon>
        <taxon>Darioconus</taxon>
    </lineage>
</organism>
<feature type="signal peptide" evidence="2">
    <location>
        <begin position="1"/>
        <end position="22"/>
    </location>
</feature>
<feature type="propeptide" id="PRO_0000404724" evidence="1">
    <location>
        <begin position="23"/>
        <end position="50"/>
    </location>
</feature>
<feature type="peptide" id="PRO_0000404725" description="Conotoxin PnMKLT1-1111">
    <location>
        <begin position="53"/>
        <end position="76"/>
    </location>
</feature>
<feature type="disulfide bond" evidence="1">
    <location>
        <begin position="53"/>
        <end position="67"/>
    </location>
</feature>
<feature type="disulfide bond" evidence="1">
    <location>
        <begin position="60"/>
        <end position="71"/>
    </location>
</feature>
<feature type="disulfide bond" evidence="1">
    <location>
        <begin position="66"/>
        <end position="75"/>
    </location>
</feature>
<proteinExistence type="evidence at transcript level"/>
<sequence length="76" mass="8632">MKLTCMMIVAVLFLTAWTVVTAVPHSNKRLANLYLKARHEMKNPEASNVDKRCFESWVACESPKRCCSHVCLFVCA</sequence>